<accession>B5XRN3</accession>
<protein>
    <recommendedName>
        <fullName evidence="1">tRNA-cytidine(32) 2-sulfurtransferase</fullName>
        <ecNumber evidence="1">2.8.1.-</ecNumber>
    </recommendedName>
    <alternativeName>
        <fullName evidence="1">Two-thiocytidine biosynthesis protein A</fullName>
    </alternativeName>
    <alternativeName>
        <fullName evidence="1">tRNA 2-thiocytidine biosynthesis protein TtcA</fullName>
    </alternativeName>
</protein>
<evidence type="ECO:0000255" key="1">
    <source>
        <dbReference type="HAMAP-Rule" id="MF_01850"/>
    </source>
</evidence>
<organism>
    <name type="scientific">Klebsiella pneumoniae (strain 342)</name>
    <dbReference type="NCBI Taxonomy" id="507522"/>
    <lineage>
        <taxon>Bacteria</taxon>
        <taxon>Pseudomonadati</taxon>
        <taxon>Pseudomonadota</taxon>
        <taxon>Gammaproteobacteria</taxon>
        <taxon>Enterobacterales</taxon>
        <taxon>Enterobacteriaceae</taxon>
        <taxon>Klebsiella/Raoultella group</taxon>
        <taxon>Klebsiella</taxon>
        <taxon>Klebsiella pneumoniae complex</taxon>
    </lineage>
</organism>
<comment type="function">
    <text evidence="1">Catalyzes the ATP-dependent 2-thiolation of cytidine in position 32 of tRNA, to form 2-thiocytidine (s(2)C32). The sulfur atoms are provided by the cysteine/cysteine desulfurase (IscS) system.</text>
</comment>
<comment type="catalytic activity">
    <reaction evidence="1">
        <text>cytidine(32) in tRNA + S-sulfanyl-L-cysteinyl-[cysteine desulfurase] + AH2 + ATP = 2-thiocytidine(32) in tRNA + L-cysteinyl-[cysteine desulfurase] + A + AMP + diphosphate + H(+)</text>
        <dbReference type="Rhea" id="RHEA:57048"/>
        <dbReference type="Rhea" id="RHEA-COMP:10288"/>
        <dbReference type="Rhea" id="RHEA-COMP:12157"/>
        <dbReference type="Rhea" id="RHEA-COMP:12158"/>
        <dbReference type="Rhea" id="RHEA-COMP:14821"/>
        <dbReference type="ChEBI" id="CHEBI:13193"/>
        <dbReference type="ChEBI" id="CHEBI:15378"/>
        <dbReference type="ChEBI" id="CHEBI:17499"/>
        <dbReference type="ChEBI" id="CHEBI:29950"/>
        <dbReference type="ChEBI" id="CHEBI:30616"/>
        <dbReference type="ChEBI" id="CHEBI:33019"/>
        <dbReference type="ChEBI" id="CHEBI:61963"/>
        <dbReference type="ChEBI" id="CHEBI:82748"/>
        <dbReference type="ChEBI" id="CHEBI:141453"/>
        <dbReference type="ChEBI" id="CHEBI:456215"/>
    </reaction>
    <physiologicalReaction direction="left-to-right" evidence="1">
        <dbReference type="Rhea" id="RHEA:57049"/>
    </physiologicalReaction>
</comment>
<comment type="cofactor">
    <cofactor evidence="1">
        <name>Mg(2+)</name>
        <dbReference type="ChEBI" id="CHEBI:18420"/>
    </cofactor>
</comment>
<comment type="cofactor">
    <cofactor evidence="1">
        <name>[4Fe-4S] cluster</name>
        <dbReference type="ChEBI" id="CHEBI:49883"/>
    </cofactor>
    <text evidence="1">Binds 1 [4Fe-4S] cluster per subunit. The cluster is chelated by three Cys residues, the fourth Fe has a free coordination site that may bind a sulfur atom transferred from the persulfide of IscS.</text>
</comment>
<comment type="pathway">
    <text evidence="1">tRNA modification.</text>
</comment>
<comment type="subunit">
    <text evidence="1">Homodimer.</text>
</comment>
<comment type="subcellular location">
    <subcellularLocation>
        <location evidence="1">Cytoplasm</location>
    </subcellularLocation>
</comment>
<comment type="miscellaneous">
    <text evidence="1">The thiolation reaction likely consists of two steps: a first activation step by ATP to form an adenylated intermediate of the target base of tRNA, and a second nucleophilic substitution step of the sulfur (S) atom supplied by the hydrosulfide attached to the Fe-S cluster.</text>
</comment>
<comment type="similarity">
    <text evidence="1">Belongs to the TtcA family.</text>
</comment>
<name>TTCA_KLEP3</name>
<proteinExistence type="inferred from homology"/>
<feature type="chain" id="PRO_1000188646" description="tRNA-cytidine(32) 2-sulfurtransferase">
    <location>
        <begin position="1"/>
        <end position="311"/>
    </location>
</feature>
<feature type="short sequence motif" description="PP-loop motif" evidence="1">
    <location>
        <begin position="47"/>
        <end position="52"/>
    </location>
</feature>
<feature type="binding site" evidence="1">
    <location>
        <position position="122"/>
    </location>
    <ligand>
        <name>[4Fe-4S] cluster</name>
        <dbReference type="ChEBI" id="CHEBI:49883"/>
    </ligand>
</feature>
<feature type="binding site" evidence="1">
    <location>
        <position position="125"/>
    </location>
    <ligand>
        <name>[4Fe-4S] cluster</name>
        <dbReference type="ChEBI" id="CHEBI:49883"/>
    </ligand>
</feature>
<feature type="binding site" evidence="1">
    <location>
        <position position="213"/>
    </location>
    <ligand>
        <name>[4Fe-4S] cluster</name>
        <dbReference type="ChEBI" id="CHEBI:49883"/>
    </ligand>
</feature>
<gene>
    <name evidence="1" type="primary">ttcA</name>
    <name type="ordered locus">KPK_3031</name>
</gene>
<dbReference type="EC" id="2.8.1.-" evidence="1"/>
<dbReference type="EMBL" id="CP000964">
    <property type="protein sequence ID" value="ACI09522.1"/>
    <property type="molecule type" value="Genomic_DNA"/>
</dbReference>
<dbReference type="SMR" id="B5XRN3"/>
<dbReference type="KEGG" id="kpe:KPK_3031"/>
<dbReference type="HOGENOM" id="CLU_026481_0_0_6"/>
<dbReference type="Proteomes" id="UP000001734">
    <property type="component" value="Chromosome"/>
</dbReference>
<dbReference type="GO" id="GO:0005737">
    <property type="term" value="C:cytoplasm"/>
    <property type="evidence" value="ECO:0007669"/>
    <property type="project" value="UniProtKB-SubCell"/>
</dbReference>
<dbReference type="GO" id="GO:0051539">
    <property type="term" value="F:4 iron, 4 sulfur cluster binding"/>
    <property type="evidence" value="ECO:0007669"/>
    <property type="project" value="UniProtKB-UniRule"/>
</dbReference>
<dbReference type="GO" id="GO:0005524">
    <property type="term" value="F:ATP binding"/>
    <property type="evidence" value="ECO:0007669"/>
    <property type="project" value="UniProtKB-UniRule"/>
</dbReference>
<dbReference type="GO" id="GO:0000287">
    <property type="term" value="F:magnesium ion binding"/>
    <property type="evidence" value="ECO:0007669"/>
    <property type="project" value="UniProtKB-UniRule"/>
</dbReference>
<dbReference type="GO" id="GO:0016783">
    <property type="term" value="F:sulfurtransferase activity"/>
    <property type="evidence" value="ECO:0007669"/>
    <property type="project" value="UniProtKB-UniRule"/>
</dbReference>
<dbReference type="GO" id="GO:0000049">
    <property type="term" value="F:tRNA binding"/>
    <property type="evidence" value="ECO:0007669"/>
    <property type="project" value="UniProtKB-KW"/>
</dbReference>
<dbReference type="GO" id="GO:0034227">
    <property type="term" value="P:tRNA thio-modification"/>
    <property type="evidence" value="ECO:0007669"/>
    <property type="project" value="UniProtKB-UniRule"/>
</dbReference>
<dbReference type="CDD" id="cd24138">
    <property type="entry name" value="TtcA-like"/>
    <property type="match status" value="1"/>
</dbReference>
<dbReference type="FunFam" id="3.40.50.620:FF:000046">
    <property type="entry name" value="tRNA-cytidine(32) 2-sulfurtransferase"/>
    <property type="match status" value="1"/>
</dbReference>
<dbReference type="Gene3D" id="3.40.50.620">
    <property type="entry name" value="HUPs"/>
    <property type="match status" value="1"/>
</dbReference>
<dbReference type="HAMAP" id="MF_01850">
    <property type="entry name" value="TtcA"/>
    <property type="match status" value="1"/>
</dbReference>
<dbReference type="InterPro" id="IPR014729">
    <property type="entry name" value="Rossmann-like_a/b/a_fold"/>
</dbReference>
<dbReference type="InterPro" id="IPR011063">
    <property type="entry name" value="TilS/TtcA_N"/>
</dbReference>
<dbReference type="InterPro" id="IPR012089">
    <property type="entry name" value="tRNA_Cyd_32_2_STrfase"/>
</dbReference>
<dbReference type="InterPro" id="IPR035107">
    <property type="entry name" value="tRNA_thiolation_TtcA_Ctu1"/>
</dbReference>
<dbReference type="NCBIfam" id="NF007972">
    <property type="entry name" value="PRK10696.1"/>
    <property type="match status" value="1"/>
</dbReference>
<dbReference type="PANTHER" id="PTHR43686:SF1">
    <property type="entry name" value="AMINOTRAN_5 DOMAIN-CONTAINING PROTEIN"/>
    <property type="match status" value="1"/>
</dbReference>
<dbReference type="PANTHER" id="PTHR43686">
    <property type="entry name" value="SULFURTRANSFERASE-RELATED"/>
    <property type="match status" value="1"/>
</dbReference>
<dbReference type="Pfam" id="PF01171">
    <property type="entry name" value="ATP_bind_3"/>
    <property type="match status" value="1"/>
</dbReference>
<dbReference type="PIRSF" id="PIRSF004976">
    <property type="entry name" value="ATPase_YdaO"/>
    <property type="match status" value="1"/>
</dbReference>
<dbReference type="SUPFAM" id="SSF52402">
    <property type="entry name" value="Adenine nucleotide alpha hydrolases-like"/>
    <property type="match status" value="1"/>
</dbReference>
<reference key="1">
    <citation type="journal article" date="2008" name="PLoS Genet.">
        <title>Complete genome sequence of the N2-fixing broad host range endophyte Klebsiella pneumoniae 342 and virulence predictions verified in mice.</title>
        <authorList>
            <person name="Fouts D.E."/>
            <person name="Tyler H.L."/>
            <person name="DeBoy R.T."/>
            <person name="Daugherty S."/>
            <person name="Ren Q."/>
            <person name="Badger J.H."/>
            <person name="Durkin A.S."/>
            <person name="Huot H."/>
            <person name="Shrivastava S."/>
            <person name="Kothari S."/>
            <person name="Dodson R.J."/>
            <person name="Mohamoud Y."/>
            <person name="Khouri H."/>
            <person name="Roesch L.F.W."/>
            <person name="Krogfelt K.A."/>
            <person name="Struve C."/>
            <person name="Triplett E.W."/>
            <person name="Methe B.A."/>
        </authorList>
    </citation>
    <scope>NUCLEOTIDE SEQUENCE [LARGE SCALE GENOMIC DNA]</scope>
    <source>
        <strain>342</strain>
    </source>
</reference>
<sequence>MLQNQEISKKEKYNIDKLQKRLRRNVGEAIADFNMIEEGDRIMVCLSGGKDSYTMLEILRNLQKSAPISFSLVAVNLDQKQPGFPEHILPAYLEQLGVEYKIVEENTYGIVKEKIPEGKTTCSLCSRLRRGILYRTATELGATKIALGHHRDDILQTLFLNMFYGGKMKGMPPKLMSDDGKHIVIRPLAYCREKDIERFSQAKGFPIIPCNLCGSQPNLQRQVIADMLRDWDKRYPGRIETMFSAMQNVVPSHLSDVNLFDFKGITHGSEVVDGGDLAFDREEIPLQPAGWQPEEEDARLDELRLNVVEVK</sequence>
<keyword id="KW-0004">4Fe-4S</keyword>
<keyword id="KW-0067">ATP-binding</keyword>
<keyword id="KW-0963">Cytoplasm</keyword>
<keyword id="KW-0408">Iron</keyword>
<keyword id="KW-0411">Iron-sulfur</keyword>
<keyword id="KW-0460">Magnesium</keyword>
<keyword id="KW-0479">Metal-binding</keyword>
<keyword id="KW-0547">Nucleotide-binding</keyword>
<keyword id="KW-0694">RNA-binding</keyword>
<keyword id="KW-0808">Transferase</keyword>
<keyword id="KW-0819">tRNA processing</keyword>
<keyword id="KW-0820">tRNA-binding</keyword>